<keyword id="KW-0046">Antibiotic resistance</keyword>
<keyword id="KW-1003">Cell membrane</keyword>
<keyword id="KW-0133">Cell shape</keyword>
<keyword id="KW-0961">Cell wall biogenesis/degradation</keyword>
<keyword id="KW-0378">Hydrolase</keyword>
<keyword id="KW-0472">Membrane</keyword>
<keyword id="KW-0573">Peptidoglycan synthesis</keyword>
<keyword id="KW-0812">Transmembrane</keyword>
<keyword id="KW-1133">Transmembrane helix</keyword>
<accession>A4IJS3</accession>
<evidence type="ECO:0000255" key="1">
    <source>
        <dbReference type="HAMAP-Rule" id="MF_01006"/>
    </source>
</evidence>
<proteinExistence type="inferred from homology"/>
<protein>
    <recommendedName>
        <fullName evidence="1">Undecaprenyl-diphosphatase</fullName>
        <ecNumber evidence="1">3.6.1.27</ecNumber>
    </recommendedName>
    <alternativeName>
        <fullName evidence="1">Bacitracin resistance protein</fullName>
    </alternativeName>
    <alternativeName>
        <fullName evidence="1">Undecaprenyl pyrophosphate phosphatase</fullName>
    </alternativeName>
</protein>
<reference key="1">
    <citation type="journal article" date="2007" name="Proc. Natl. Acad. Sci. U.S.A.">
        <title>Genome and proteome of long-chain alkane degrading Geobacillus thermodenitrificans NG80-2 isolated from a deep-subsurface oil reservoir.</title>
        <authorList>
            <person name="Feng L."/>
            <person name="Wang W."/>
            <person name="Cheng J."/>
            <person name="Ren Y."/>
            <person name="Zhao G."/>
            <person name="Gao C."/>
            <person name="Tang Y."/>
            <person name="Liu X."/>
            <person name="Han W."/>
            <person name="Peng X."/>
            <person name="Liu R."/>
            <person name="Wang L."/>
        </authorList>
    </citation>
    <scope>NUCLEOTIDE SEQUENCE [LARGE SCALE GENOMIC DNA]</scope>
    <source>
        <strain>NG80-2</strain>
    </source>
</reference>
<name>UPPP_GEOTN</name>
<dbReference type="EC" id="3.6.1.27" evidence="1"/>
<dbReference type="EMBL" id="CP000557">
    <property type="protein sequence ID" value="ABO65577.1"/>
    <property type="molecule type" value="Genomic_DNA"/>
</dbReference>
<dbReference type="RefSeq" id="WP_011886664.1">
    <property type="nucleotide sequence ID" value="NC_009328.1"/>
</dbReference>
<dbReference type="SMR" id="A4IJS3"/>
<dbReference type="KEGG" id="gtn:GTNG_0193"/>
<dbReference type="eggNOG" id="COG1968">
    <property type="taxonomic scope" value="Bacteria"/>
</dbReference>
<dbReference type="HOGENOM" id="CLU_060296_2_0_9"/>
<dbReference type="Proteomes" id="UP000001578">
    <property type="component" value="Chromosome"/>
</dbReference>
<dbReference type="GO" id="GO:0005886">
    <property type="term" value="C:plasma membrane"/>
    <property type="evidence" value="ECO:0007669"/>
    <property type="project" value="UniProtKB-SubCell"/>
</dbReference>
<dbReference type="GO" id="GO:0050380">
    <property type="term" value="F:undecaprenyl-diphosphatase activity"/>
    <property type="evidence" value="ECO:0007669"/>
    <property type="project" value="UniProtKB-UniRule"/>
</dbReference>
<dbReference type="GO" id="GO:0071555">
    <property type="term" value="P:cell wall organization"/>
    <property type="evidence" value="ECO:0007669"/>
    <property type="project" value="UniProtKB-KW"/>
</dbReference>
<dbReference type="GO" id="GO:0009252">
    <property type="term" value="P:peptidoglycan biosynthetic process"/>
    <property type="evidence" value="ECO:0007669"/>
    <property type="project" value="UniProtKB-KW"/>
</dbReference>
<dbReference type="GO" id="GO:0008360">
    <property type="term" value="P:regulation of cell shape"/>
    <property type="evidence" value="ECO:0007669"/>
    <property type="project" value="UniProtKB-KW"/>
</dbReference>
<dbReference type="GO" id="GO:0046677">
    <property type="term" value="P:response to antibiotic"/>
    <property type="evidence" value="ECO:0007669"/>
    <property type="project" value="UniProtKB-UniRule"/>
</dbReference>
<dbReference type="HAMAP" id="MF_01006">
    <property type="entry name" value="Undec_diphosphatase"/>
    <property type="match status" value="1"/>
</dbReference>
<dbReference type="InterPro" id="IPR003824">
    <property type="entry name" value="UppP"/>
</dbReference>
<dbReference type="NCBIfam" id="NF001390">
    <property type="entry name" value="PRK00281.1-4"/>
    <property type="match status" value="1"/>
</dbReference>
<dbReference type="NCBIfam" id="TIGR00753">
    <property type="entry name" value="undec_PP_bacA"/>
    <property type="match status" value="1"/>
</dbReference>
<dbReference type="PANTHER" id="PTHR30622">
    <property type="entry name" value="UNDECAPRENYL-DIPHOSPHATASE"/>
    <property type="match status" value="1"/>
</dbReference>
<dbReference type="PANTHER" id="PTHR30622:SF3">
    <property type="entry name" value="UNDECAPRENYL-DIPHOSPHATASE"/>
    <property type="match status" value="1"/>
</dbReference>
<dbReference type="Pfam" id="PF02673">
    <property type="entry name" value="BacA"/>
    <property type="match status" value="1"/>
</dbReference>
<comment type="function">
    <text evidence="1">Catalyzes the dephosphorylation of undecaprenyl diphosphate (UPP). Confers resistance to bacitracin.</text>
</comment>
<comment type="catalytic activity">
    <reaction evidence="1">
        <text>di-trans,octa-cis-undecaprenyl diphosphate + H2O = di-trans,octa-cis-undecaprenyl phosphate + phosphate + H(+)</text>
        <dbReference type="Rhea" id="RHEA:28094"/>
        <dbReference type="ChEBI" id="CHEBI:15377"/>
        <dbReference type="ChEBI" id="CHEBI:15378"/>
        <dbReference type="ChEBI" id="CHEBI:43474"/>
        <dbReference type="ChEBI" id="CHEBI:58405"/>
        <dbReference type="ChEBI" id="CHEBI:60392"/>
        <dbReference type="EC" id="3.6.1.27"/>
    </reaction>
</comment>
<comment type="subcellular location">
    <subcellularLocation>
        <location evidence="1">Cell membrane</location>
        <topology evidence="1">Multi-pass membrane protein</topology>
    </subcellularLocation>
</comment>
<comment type="miscellaneous">
    <text>Bacitracin is thought to be involved in the inhibition of peptidoglycan synthesis by sequestering undecaprenyl diphosphate, thereby reducing the pool of lipid carrier available.</text>
</comment>
<comment type="similarity">
    <text evidence="1">Belongs to the UppP family.</text>
</comment>
<feature type="chain" id="PRO_0000303028" description="Undecaprenyl-diphosphatase">
    <location>
        <begin position="1"/>
        <end position="273"/>
    </location>
</feature>
<feature type="transmembrane region" description="Helical" evidence="1">
    <location>
        <begin position="48"/>
        <end position="68"/>
    </location>
</feature>
<feature type="transmembrane region" description="Helical" evidence="1">
    <location>
        <begin position="89"/>
        <end position="109"/>
    </location>
</feature>
<feature type="transmembrane region" description="Helical" evidence="1">
    <location>
        <begin position="116"/>
        <end position="136"/>
    </location>
</feature>
<feature type="transmembrane region" description="Helical" evidence="1">
    <location>
        <begin position="152"/>
        <end position="172"/>
    </location>
</feature>
<feature type="transmembrane region" description="Helical" evidence="1">
    <location>
        <begin position="193"/>
        <end position="213"/>
    </location>
</feature>
<feature type="transmembrane region" description="Helical" evidence="1">
    <location>
        <begin position="222"/>
        <end position="242"/>
    </location>
</feature>
<feature type="transmembrane region" description="Helical" evidence="1">
    <location>
        <begin position="252"/>
        <end position="272"/>
    </location>
</feature>
<organism>
    <name type="scientific">Geobacillus thermodenitrificans (strain NG80-2)</name>
    <dbReference type="NCBI Taxonomy" id="420246"/>
    <lineage>
        <taxon>Bacteria</taxon>
        <taxon>Bacillati</taxon>
        <taxon>Bacillota</taxon>
        <taxon>Bacilli</taxon>
        <taxon>Bacillales</taxon>
        <taxon>Anoxybacillaceae</taxon>
        <taxon>Geobacillus</taxon>
    </lineage>
</organism>
<sequence>MDWMELLKAVILGMVEGLTEFAPVSSTGHMIIVDDLWLKSTEFLGKYAANTFKVVIQLGSILAAVVVFKDRFLELLGIRGRHPGGKPRLTLLHVIIGLLPAGVLGVLFEDYIDEHLFSTKTVLIGLVLGALLMIVADRFAKKAARAQTVDQITYKQAFLVGLVQCLSLWPGFSRSGSTIAGGVLVGMSHRAAADFTFIMAVPIMAGASGLSLLKNWQYVTVADIPFFIAGFLSAFVFALLAIRFFLHLINRIRLVPFAVYRIALAFIIYFLYF</sequence>
<gene>
    <name evidence="1" type="primary">uppP</name>
    <name type="ordered locus">GTNG_0193</name>
</gene>